<keyword id="KW-0067">ATP-binding</keyword>
<keyword id="KW-0547">Nucleotide-binding</keyword>
<keyword id="KW-0808">Transferase</keyword>
<gene>
    <name evidence="1" type="primary">citG1</name>
    <name type="ordered locus">SCH_0057</name>
</gene>
<accession>Q57TJ8</accession>
<feature type="chain" id="PRO_0000255407" description="Probable 2-(5''-triphosphoribosyl)-3'-dephosphocoenzyme-A synthase 1">
    <location>
        <begin position="1"/>
        <end position="302"/>
    </location>
</feature>
<evidence type="ECO:0000255" key="1">
    <source>
        <dbReference type="HAMAP-Rule" id="MF_00397"/>
    </source>
</evidence>
<protein>
    <recommendedName>
        <fullName evidence="1">Probable 2-(5''-triphosphoribosyl)-3'-dephosphocoenzyme-A synthase 1</fullName>
        <shortName evidence="1">2-(5''-triphosphoribosyl)-3'-dephospho-CoA synthase 1</shortName>
        <ecNumber evidence="1">2.4.2.52</ecNumber>
    </recommendedName>
</protein>
<proteinExistence type="inferred from homology"/>
<organism>
    <name type="scientific">Salmonella choleraesuis (strain SC-B67)</name>
    <dbReference type="NCBI Taxonomy" id="321314"/>
    <lineage>
        <taxon>Bacteria</taxon>
        <taxon>Pseudomonadati</taxon>
        <taxon>Pseudomonadota</taxon>
        <taxon>Gammaproteobacteria</taxon>
        <taxon>Enterobacterales</taxon>
        <taxon>Enterobacteriaceae</taxon>
        <taxon>Salmonella</taxon>
    </lineage>
</organism>
<name>CITG1_SALCH</name>
<sequence>MNVSVVTERRTPAYSSLAAGELNGLVARALLTEARLTPKPGLVDIRNSGAHRDMDLAAFERSTTAIAPWMEKFFIMGNNTAALAAENVLVMLRPLGMACENDMLQATNGVNTHRGAIFAFGLLSAAIGRLLARGEPLEQNRICDQVARLSRNIVAHELSAKKAGKLTKSETHFQCYGLSGARGEAESGFRTVRTQALPVFNRVVQEHDDTHLALLQTLLHLMAWNDDTNLVSRGGLEGLYYVQQQAQKLLWQGGVLVEGGIEAMQSLDDELILRNLSPGGSADLLAVTWFLSHFPAGSLYPE</sequence>
<reference key="1">
    <citation type="journal article" date="2005" name="Nucleic Acids Res.">
        <title>The genome sequence of Salmonella enterica serovar Choleraesuis, a highly invasive and resistant zoonotic pathogen.</title>
        <authorList>
            <person name="Chiu C.-H."/>
            <person name="Tang P."/>
            <person name="Chu C."/>
            <person name="Hu S."/>
            <person name="Bao Q."/>
            <person name="Yu J."/>
            <person name="Chou Y.-Y."/>
            <person name="Wang H.-S."/>
            <person name="Lee Y.-S."/>
        </authorList>
    </citation>
    <scope>NUCLEOTIDE SEQUENCE [LARGE SCALE GENOMIC DNA]</scope>
    <source>
        <strain>SC-B67</strain>
    </source>
</reference>
<comment type="catalytic activity">
    <reaction evidence="1">
        <text>3'-dephospho-CoA + ATP = 2'-(5''-triphospho-alpha-D-ribosyl)-3'-dephospho-CoA + adenine</text>
        <dbReference type="Rhea" id="RHEA:15117"/>
        <dbReference type="ChEBI" id="CHEBI:16708"/>
        <dbReference type="ChEBI" id="CHEBI:30616"/>
        <dbReference type="ChEBI" id="CHEBI:57328"/>
        <dbReference type="ChEBI" id="CHEBI:61378"/>
        <dbReference type="EC" id="2.4.2.52"/>
    </reaction>
</comment>
<comment type="similarity">
    <text evidence="1">Belongs to the CitG/MdcB family.</text>
</comment>
<dbReference type="EC" id="2.4.2.52" evidence="1"/>
<dbReference type="EMBL" id="AE017220">
    <property type="protein sequence ID" value="AAX63963.1"/>
    <property type="molecule type" value="Genomic_DNA"/>
</dbReference>
<dbReference type="KEGG" id="sec:SCH_0057"/>
<dbReference type="HOGENOM" id="CLU_056179_1_0_6"/>
<dbReference type="Proteomes" id="UP000000538">
    <property type="component" value="Chromosome"/>
</dbReference>
<dbReference type="GO" id="GO:0005524">
    <property type="term" value="F:ATP binding"/>
    <property type="evidence" value="ECO:0007669"/>
    <property type="project" value="UniProtKB-KW"/>
</dbReference>
<dbReference type="GO" id="GO:0046917">
    <property type="term" value="F:triphosphoribosyl-dephospho-CoA synthase activity"/>
    <property type="evidence" value="ECO:0007669"/>
    <property type="project" value="UniProtKB-UniRule"/>
</dbReference>
<dbReference type="GO" id="GO:0051191">
    <property type="term" value="P:prosthetic group biosynthetic process"/>
    <property type="evidence" value="ECO:0007669"/>
    <property type="project" value="TreeGrafter"/>
</dbReference>
<dbReference type="FunFam" id="1.10.4200.10:FF:000001">
    <property type="entry name" value="Triphosphoribosyl-dephospho-CoA synthase CitG"/>
    <property type="match status" value="1"/>
</dbReference>
<dbReference type="Gene3D" id="1.10.4200.10">
    <property type="entry name" value="Triphosphoribosyl-dephospho-CoA protein"/>
    <property type="match status" value="1"/>
</dbReference>
<dbReference type="HAMAP" id="MF_00397">
    <property type="entry name" value="CitG"/>
    <property type="match status" value="1"/>
</dbReference>
<dbReference type="InterPro" id="IPR002736">
    <property type="entry name" value="CitG"/>
</dbReference>
<dbReference type="InterPro" id="IPR017551">
    <property type="entry name" value="TriPribosyl-deP-CoA_syn_CitG"/>
</dbReference>
<dbReference type="NCBIfam" id="TIGR03125">
    <property type="entry name" value="citrate_citG"/>
    <property type="match status" value="1"/>
</dbReference>
<dbReference type="PANTHER" id="PTHR30201:SF2">
    <property type="entry name" value="2-(5''-TRIPHOSPHORIBOSYL)-3'-DEPHOSPHOCOENZYME-A SYNTHASE"/>
    <property type="match status" value="1"/>
</dbReference>
<dbReference type="PANTHER" id="PTHR30201">
    <property type="entry name" value="TRIPHOSPHORIBOSYL-DEPHOSPHO-COA SYNTHASE"/>
    <property type="match status" value="1"/>
</dbReference>
<dbReference type="Pfam" id="PF01874">
    <property type="entry name" value="CitG"/>
    <property type="match status" value="1"/>
</dbReference>